<name>WBPB_PSEAE</name>
<organism>
    <name type="scientific">Pseudomonas aeruginosa (strain ATCC 15692 / DSM 22644 / CIP 104116 / JCM 14847 / LMG 12228 / 1C / PRS 101 / PAO1)</name>
    <dbReference type="NCBI Taxonomy" id="208964"/>
    <lineage>
        <taxon>Bacteria</taxon>
        <taxon>Pseudomonadati</taxon>
        <taxon>Pseudomonadota</taxon>
        <taxon>Gammaproteobacteria</taxon>
        <taxon>Pseudomonadales</taxon>
        <taxon>Pseudomonadaceae</taxon>
        <taxon>Pseudomonas</taxon>
    </lineage>
</organism>
<keyword id="KW-0002">3D-structure</keyword>
<keyword id="KW-0961">Cell wall biogenesis/degradation</keyword>
<keyword id="KW-0448">Lipopolysaccharide biosynthesis</keyword>
<keyword id="KW-0520">NAD</keyword>
<keyword id="KW-0547">Nucleotide-binding</keyword>
<keyword id="KW-0560">Oxidoreductase</keyword>
<keyword id="KW-1185">Reference proteome</keyword>
<evidence type="ECO:0000255" key="1"/>
<evidence type="ECO:0000269" key="2">
    <source>
    </source>
</evidence>
<evidence type="ECO:0000269" key="3">
    <source>
    </source>
</evidence>
<evidence type="ECO:0000269" key="4">
    <source>
    </source>
</evidence>
<evidence type="ECO:0000269" key="5">
    <source>
    </source>
</evidence>
<evidence type="ECO:0000269" key="6">
    <source>
    </source>
</evidence>
<evidence type="ECO:0000269" key="7">
    <source>
    </source>
</evidence>
<evidence type="ECO:0000303" key="8">
    <source>
    </source>
</evidence>
<evidence type="ECO:0000305" key="9"/>
<evidence type="ECO:0000312" key="10">
    <source>
        <dbReference type="EMBL" id="AAC45853.1"/>
    </source>
</evidence>
<evidence type="ECO:0000312" key="11">
    <source>
        <dbReference type="EMBL" id="AAG06546.1"/>
    </source>
</evidence>
<evidence type="ECO:0000312" key="12">
    <source>
        <dbReference type="EMBL" id="AAM27797.1"/>
    </source>
</evidence>
<evidence type="ECO:0000312" key="13">
    <source>
        <dbReference type="PDB" id="3OA2"/>
    </source>
</evidence>
<evidence type="ECO:0007829" key="14">
    <source>
        <dbReference type="PDB" id="3OA2"/>
    </source>
</evidence>
<reference evidence="9 10" key="1">
    <citation type="journal article" date="1996" name="Mol. Microbiol.">
        <title>Molecular characterization of the Pseudomonas aeruginosa serotype O5 (PAO1) B-band lipopolysaccharide gene cluster.</title>
        <authorList>
            <person name="Burrows L.L."/>
            <person name="Charter D.F."/>
            <person name="Lam J.S."/>
        </authorList>
    </citation>
    <scope>NUCLEOTIDE SEQUENCE [GENOMIC DNA]</scope>
    <scope>PATHWAY</scope>
    <source>
        <strain evidence="10">ATCC 15692 / DSM 22644 / CIP 104116 / JCM 14847 / LMG 12228 / 1C / PRS 101 / PAO1</strain>
    </source>
</reference>
<reference evidence="12" key="2">
    <citation type="journal article" date="2002" name="J. Bacteriol.">
        <title>Genetic variation at the O-antigen biosynthetic locus in Pseudomonas aeruginosa.</title>
        <authorList>
            <person name="Raymond C.K."/>
            <person name="Sims E.H."/>
            <person name="Kas A."/>
            <person name="Spencer D.H."/>
            <person name="Kutyavin T.V."/>
            <person name="Ivey R.G."/>
            <person name="Zhou Y."/>
            <person name="Kaul R."/>
            <person name="Clendenning J.B."/>
            <person name="Olson M.V."/>
        </authorList>
    </citation>
    <scope>NUCLEOTIDE SEQUENCE [GENOMIC DNA]</scope>
    <source>
        <strain evidence="2">ATCC 15692 / DSM 22644 / CIP 104116 / JCM 14847 / LMG 12228 / 1C / PRS 101 / PAO1</strain>
    </source>
</reference>
<reference evidence="11" key="3">
    <citation type="journal article" date="2000" name="Nature">
        <title>Complete genome sequence of Pseudomonas aeruginosa PAO1, an opportunistic pathogen.</title>
        <authorList>
            <person name="Stover C.K."/>
            <person name="Pham X.-Q.T."/>
            <person name="Erwin A.L."/>
            <person name="Mizoguchi S.D."/>
            <person name="Warrener P."/>
            <person name="Hickey M.J."/>
            <person name="Brinkman F.S.L."/>
            <person name="Hufnagle W.O."/>
            <person name="Kowalik D.J."/>
            <person name="Lagrou M."/>
            <person name="Garber R.L."/>
            <person name="Goltry L."/>
            <person name="Tolentino E."/>
            <person name="Westbrock-Wadman S."/>
            <person name="Yuan Y."/>
            <person name="Brody L.L."/>
            <person name="Coulter S.N."/>
            <person name="Folger K.R."/>
            <person name="Kas A."/>
            <person name="Larbig K."/>
            <person name="Lim R.M."/>
            <person name="Smith K.A."/>
            <person name="Spencer D.H."/>
            <person name="Wong G.K.-S."/>
            <person name="Wu Z."/>
            <person name="Paulsen I.T."/>
            <person name="Reizer J."/>
            <person name="Saier M.H. Jr."/>
            <person name="Hancock R.E.W."/>
            <person name="Lory S."/>
            <person name="Olson M.V."/>
        </authorList>
    </citation>
    <scope>NUCLEOTIDE SEQUENCE [LARGE SCALE GENOMIC DNA]</scope>
    <source>
        <strain>ATCC 15692 / DSM 22644 / CIP 104116 / JCM 14847 / LMG 12228 / 1C / PRS 101 / PAO1</strain>
    </source>
</reference>
<reference evidence="9" key="4">
    <citation type="journal article" date="2008" name="J. Bacteriol.">
        <title>Biosynthesis of a rare di-N-acetylated sugar in the lipopolysaccharides of both Pseudomonas aeruginosa and Bordetella pertussis occurs via an identical scheme despite different gene clusters.</title>
        <authorList>
            <person name="Westman E.L."/>
            <person name="Preston A."/>
            <person name="Field R.A."/>
            <person name="Lam J.S."/>
        </authorList>
    </citation>
    <scope>FUNCTION</scope>
    <scope>PATHWAY</scope>
    <source>
        <strain evidence="3">ATCC 15692 / DSM 22644 / CIP 104116 / JCM 14847 / LMG 12228 / 1C / PRS 101 / PAO1</strain>
    </source>
</reference>
<reference evidence="9" key="5">
    <citation type="journal article" date="2009" name="Biochemistry">
        <title>Biosynthesis of UDP-GlcNAc(3NAc)A by WbpB, WbpE, and WbpD: enzymes in the Wbp pathway responsible for O-antigen assembly in Pseudomonas aeruginosa PAO1.</title>
        <authorList>
            <person name="Larkin A."/>
            <person name="Imperiali B."/>
        </authorList>
    </citation>
    <scope>FUNCTION</scope>
    <scope>CATALYTIC ACTIVITY</scope>
    <scope>SUBSTRATE SPECIFICITY</scope>
    <scope>BIOPHYSICOCHEMICAL PROPERTIES</scope>
    <scope>PATHWAY</scope>
    <source>
        <strain evidence="5">ATCC 15692 / DSM 22644 / CIP 104116 / JCM 14847 / LMG 12228 / 1C / PRS 101 / PAO1</strain>
    </source>
</reference>
<reference evidence="9" key="6">
    <citation type="journal article" date="2009" name="J. Biol. Chem.">
        <title>Characterization of WbpB, WbpE, and WbpD and reconstitution of a pathway for the biosynthesis of UDP-2,3-diacetamido-2,3-dideoxy-D-mannuronic acid in Pseudomonas aeruginosa.</title>
        <authorList>
            <person name="Westman E.L."/>
            <person name="McNally D.J."/>
            <person name="Charchoglyan A."/>
            <person name="Brewer D."/>
            <person name="Field R.A."/>
            <person name="Lam J.S."/>
        </authorList>
    </citation>
    <scope>FUNCTION</scope>
    <scope>CATALYTIC ACTIVITY</scope>
    <scope>PATHWAY</scope>
    <source>
        <strain evidence="4">ATCC 15692 / DSM 22644 / CIP 104116 / JCM 14847 / LMG 12228 / 1C / PRS 101 / PAO1</strain>
    </source>
</reference>
<reference evidence="9 13" key="7">
    <citation type="journal article" date="2010" name="Biochemistry">
        <title>Structural and functional studies of WlbA: a dehydrogenase involved in the biosynthesis of 2,3-diacetamido-2,3-dideoxy-D-mannuronic acid.</title>
        <authorList>
            <person name="Thoden J.B."/>
            <person name="Holden H.M."/>
        </authorList>
    </citation>
    <scope>X-RAY CRYSTALLOGRAPHY (1.50 ANGSTROMS) IN COMPLEX WITH NAD</scope>
    <scope>FUNCTION</scope>
    <scope>CATALYTIC ACTIVITY</scope>
    <scope>KINETIC PARAMETERS</scope>
    <scope>REACTION MECHANISM</scope>
    <scope>SUBUNIT</scope>
    <source>
        <strain evidence="6">ATCC 15692 / DSM 22644 / CIP 104116 / JCM 14847 / LMG 12228 / 1C / PRS 101 / PAO1</strain>
    </source>
</reference>
<feature type="chain" id="PRO_0000419621" description="UDP-N-acetyl-2-amino-2-deoxy-D-glucuronate oxidase">
    <location>
        <begin position="1"/>
        <end position="316"/>
    </location>
</feature>
<feature type="binding site" evidence="6">
    <location>
        <begin position="11"/>
        <end position="13"/>
    </location>
    <ligand>
        <name>NAD(+)</name>
        <dbReference type="ChEBI" id="CHEBI:57540"/>
    </ligand>
</feature>
<feature type="binding site" evidence="6">
    <location>
        <begin position="32"/>
        <end position="37"/>
    </location>
    <ligand>
        <name>NAD(+)</name>
        <dbReference type="ChEBI" id="CHEBI:57540"/>
    </ligand>
</feature>
<feature type="binding site" evidence="6">
    <location>
        <position position="55"/>
    </location>
    <ligand>
        <name>NAD(+)</name>
        <dbReference type="ChEBI" id="CHEBI:57540"/>
    </ligand>
</feature>
<feature type="binding site" evidence="6">
    <location>
        <begin position="81"/>
        <end position="84"/>
    </location>
    <ligand>
        <name>NAD(+)</name>
        <dbReference type="ChEBI" id="CHEBI:57540"/>
    </ligand>
</feature>
<feature type="binding site" evidence="6">
    <location>
        <begin position="101"/>
        <end position="102"/>
    </location>
    <ligand>
        <name>NAD(+)</name>
        <dbReference type="ChEBI" id="CHEBI:57540"/>
    </ligand>
</feature>
<feature type="binding site" evidence="6">
    <location>
        <position position="130"/>
    </location>
    <ligand>
        <name>NAD(+)</name>
        <dbReference type="ChEBI" id="CHEBI:57540"/>
    </ligand>
</feature>
<feature type="binding site" evidence="6">
    <location>
        <begin position="171"/>
        <end position="172"/>
    </location>
    <ligand>
        <name>NAD(+)</name>
        <dbReference type="ChEBI" id="CHEBI:57540"/>
    </ligand>
</feature>
<feature type="sequence conflict" description="In Ref. 1; AAC45853." evidence="9" ref="1">
    <original>A</original>
    <variation>T</variation>
    <location>
        <position position="213"/>
    </location>
</feature>
<feature type="sequence conflict" description="In Ref. 2; AAM27797." evidence="9" ref="2">
    <original>S</original>
    <variation>W</variation>
    <location>
        <position position="238"/>
    </location>
</feature>
<feature type="strand" evidence="14">
    <location>
        <begin position="3"/>
        <end position="7"/>
    </location>
</feature>
<feature type="turn" evidence="14">
    <location>
        <begin position="8"/>
        <end position="10"/>
    </location>
</feature>
<feature type="strand" evidence="14">
    <location>
        <begin position="11"/>
        <end position="13"/>
    </location>
</feature>
<feature type="helix" evidence="14">
    <location>
        <begin position="14"/>
        <end position="23"/>
    </location>
</feature>
<feature type="strand" evidence="14">
    <location>
        <begin position="27"/>
        <end position="32"/>
    </location>
</feature>
<feature type="helix" evidence="14">
    <location>
        <begin position="39"/>
        <end position="43"/>
    </location>
</feature>
<feature type="strand" evidence="14">
    <location>
        <begin position="49"/>
        <end position="53"/>
    </location>
</feature>
<feature type="helix" evidence="14">
    <location>
        <begin position="54"/>
        <end position="64"/>
    </location>
</feature>
<feature type="turn" evidence="14">
    <location>
        <begin position="68"/>
        <end position="70"/>
    </location>
</feature>
<feature type="strand" evidence="14">
    <location>
        <begin position="74"/>
        <end position="77"/>
    </location>
</feature>
<feature type="helix" evidence="14">
    <location>
        <begin position="81"/>
        <end position="83"/>
    </location>
</feature>
<feature type="helix" evidence="14">
    <location>
        <begin position="84"/>
        <end position="93"/>
    </location>
</feature>
<feature type="strand" evidence="14">
    <location>
        <begin position="97"/>
        <end position="100"/>
    </location>
</feature>
<feature type="helix" evidence="14">
    <location>
        <begin position="108"/>
        <end position="121"/>
    </location>
</feature>
<feature type="strand" evidence="14">
    <location>
        <begin position="125"/>
        <end position="127"/>
    </location>
</feature>
<feature type="helix" evidence="14">
    <location>
        <begin position="130"/>
        <end position="133"/>
    </location>
</feature>
<feature type="helix" evidence="14">
    <location>
        <begin position="135"/>
        <end position="146"/>
    </location>
</feature>
<feature type="strand" evidence="14">
    <location>
        <begin position="153"/>
        <end position="161"/>
    </location>
</feature>
<feature type="helix" evidence="14">
    <location>
        <begin position="166"/>
        <end position="169"/>
    </location>
</feature>
<feature type="helix" evidence="14">
    <location>
        <begin position="171"/>
        <end position="173"/>
    </location>
</feature>
<feature type="helix" evidence="14">
    <location>
        <begin position="175"/>
        <end position="178"/>
    </location>
</feature>
<feature type="helix" evidence="14">
    <location>
        <begin position="181"/>
        <end position="197"/>
    </location>
</feature>
<feature type="strand" evidence="14">
    <location>
        <begin position="199"/>
        <end position="208"/>
    </location>
</feature>
<feature type="strand" evidence="14">
    <location>
        <begin position="210"/>
        <end position="219"/>
    </location>
</feature>
<feature type="strand" evidence="14">
    <location>
        <begin position="222"/>
        <end position="229"/>
    </location>
</feature>
<feature type="helix" evidence="14">
    <location>
        <begin position="232"/>
        <end position="234"/>
    </location>
</feature>
<feature type="turn" evidence="14">
    <location>
        <begin position="237"/>
        <end position="242"/>
    </location>
</feature>
<feature type="strand" evidence="14">
    <location>
        <begin position="244"/>
        <end position="251"/>
    </location>
</feature>
<feature type="helix" evidence="14">
    <location>
        <begin position="265"/>
        <end position="274"/>
    </location>
</feature>
<feature type="helix" evidence="14">
    <location>
        <begin position="281"/>
        <end position="296"/>
    </location>
</feature>
<feature type="turn" evidence="14">
    <location>
        <begin position="304"/>
        <end position="306"/>
    </location>
</feature>
<feature type="turn" evidence="14">
    <location>
        <begin position="309"/>
        <end position="311"/>
    </location>
</feature>
<proteinExistence type="evidence at protein level"/>
<dbReference type="EC" id="1.1.1.335"/>
<dbReference type="EMBL" id="U50396">
    <property type="protein sequence ID" value="AAC45853.1"/>
    <property type="molecule type" value="Genomic_DNA"/>
</dbReference>
<dbReference type="EMBL" id="AF498416">
    <property type="protein sequence ID" value="AAM27797.1"/>
    <property type="molecule type" value="Genomic_DNA"/>
</dbReference>
<dbReference type="EMBL" id="AE004091">
    <property type="protein sequence ID" value="AAG06546.1"/>
    <property type="molecule type" value="Genomic_DNA"/>
</dbReference>
<dbReference type="PIR" id="H83251">
    <property type="entry name" value="H83251"/>
</dbReference>
<dbReference type="RefSeq" id="NP_251848.1">
    <property type="nucleotide sequence ID" value="NC_002516.2"/>
</dbReference>
<dbReference type="RefSeq" id="WP_003113428.1">
    <property type="nucleotide sequence ID" value="NZ_QZGE01000023.1"/>
</dbReference>
<dbReference type="PDB" id="3OA2">
    <property type="method" value="X-ray"/>
    <property type="resolution" value="1.50 A"/>
    <property type="chains" value="A/B/C/D=1-316"/>
</dbReference>
<dbReference type="PDBsum" id="3OA2"/>
<dbReference type="SMR" id="G3XD23"/>
<dbReference type="STRING" id="208964.PA3158"/>
<dbReference type="PaxDb" id="208964-PA3158"/>
<dbReference type="DNASU" id="882642"/>
<dbReference type="GeneID" id="882642"/>
<dbReference type="KEGG" id="pae:PA3158"/>
<dbReference type="PATRIC" id="fig|208964.12.peg.3302"/>
<dbReference type="PseudoCAP" id="PA3158"/>
<dbReference type="HOGENOM" id="CLU_862341_0_0_6"/>
<dbReference type="InParanoid" id="G3XD23"/>
<dbReference type="OrthoDB" id="9801953at2"/>
<dbReference type="PhylomeDB" id="G3XD23"/>
<dbReference type="BioCyc" id="MetaCyc:MONOMER-17573"/>
<dbReference type="BioCyc" id="PAER208964:G1FZ6-3218-MONOMER"/>
<dbReference type="BRENDA" id="1.1.1.335">
    <property type="organism ID" value="5087"/>
</dbReference>
<dbReference type="UniPathway" id="UPA00281"/>
<dbReference type="EvolutionaryTrace" id="G3XD23"/>
<dbReference type="Proteomes" id="UP000002438">
    <property type="component" value="Chromosome"/>
</dbReference>
<dbReference type="GO" id="GO:0070403">
    <property type="term" value="F:NAD+ binding"/>
    <property type="evidence" value="ECO:0000314"/>
    <property type="project" value="UniProtKB"/>
</dbReference>
<dbReference type="GO" id="GO:0070404">
    <property type="term" value="F:NADH binding"/>
    <property type="evidence" value="ECO:0000314"/>
    <property type="project" value="UniProtKB"/>
</dbReference>
<dbReference type="GO" id="GO:0003954">
    <property type="term" value="F:NADH dehydrogenase activity"/>
    <property type="evidence" value="ECO:0000269"/>
    <property type="project" value="PseudoCAP"/>
</dbReference>
<dbReference type="GO" id="GO:0004617">
    <property type="term" value="F:phosphoglycerate dehydrogenase activity"/>
    <property type="evidence" value="ECO:0000314"/>
    <property type="project" value="UniProtKB"/>
</dbReference>
<dbReference type="GO" id="GO:0071555">
    <property type="term" value="P:cell wall organization"/>
    <property type="evidence" value="ECO:0007669"/>
    <property type="project" value="UniProtKB-KW"/>
</dbReference>
<dbReference type="GO" id="GO:0009103">
    <property type="term" value="P:lipopolysaccharide biosynthetic process"/>
    <property type="evidence" value="ECO:0000314"/>
    <property type="project" value="UniProtKB"/>
</dbReference>
<dbReference type="GO" id="GO:0009243">
    <property type="term" value="P:O antigen biosynthetic process"/>
    <property type="evidence" value="ECO:0000314"/>
    <property type="project" value="UniProtKB"/>
</dbReference>
<dbReference type="GO" id="GO:0000271">
    <property type="term" value="P:polysaccharide biosynthetic process"/>
    <property type="evidence" value="ECO:0000314"/>
    <property type="project" value="PseudoCAP"/>
</dbReference>
<dbReference type="GO" id="GO:0051262">
    <property type="term" value="P:protein tetramerization"/>
    <property type="evidence" value="ECO:0000314"/>
    <property type="project" value="UniProtKB"/>
</dbReference>
<dbReference type="GO" id="GO:0006065">
    <property type="term" value="P:UDP-glucuronate biosynthetic process"/>
    <property type="evidence" value="ECO:0000269"/>
    <property type="project" value="PseudoCAP"/>
</dbReference>
<dbReference type="FunFam" id="3.40.50.720:FF:001389">
    <property type="entry name" value="UDP-N-acetyl-2-amino-2-deoxy-D-glucuronate oxidase"/>
    <property type="match status" value="1"/>
</dbReference>
<dbReference type="Gene3D" id="3.30.360.10">
    <property type="entry name" value="Dihydrodipicolinate Reductase, domain 2"/>
    <property type="match status" value="1"/>
</dbReference>
<dbReference type="Gene3D" id="3.40.50.720">
    <property type="entry name" value="NAD(P)-binding Rossmann-like Domain"/>
    <property type="match status" value="1"/>
</dbReference>
<dbReference type="InterPro" id="IPR004104">
    <property type="entry name" value="Gfo/Idh/MocA-like_OxRdtase_C"/>
</dbReference>
<dbReference type="InterPro" id="IPR000683">
    <property type="entry name" value="Gfo/Idh/MocA-like_OxRdtase_N"/>
</dbReference>
<dbReference type="InterPro" id="IPR052515">
    <property type="entry name" value="Gfo/Idh/MocA_Oxidoreductase"/>
</dbReference>
<dbReference type="InterPro" id="IPR036291">
    <property type="entry name" value="NAD(P)-bd_dom_sf"/>
</dbReference>
<dbReference type="PANTHER" id="PTHR43249:SF1">
    <property type="entry name" value="D-GLUCOSIDE 3-DEHYDROGENASE"/>
    <property type="match status" value="1"/>
</dbReference>
<dbReference type="PANTHER" id="PTHR43249">
    <property type="entry name" value="UDP-N-ACETYL-2-AMINO-2-DEOXY-D-GLUCURONATE OXIDASE"/>
    <property type="match status" value="1"/>
</dbReference>
<dbReference type="Pfam" id="PF01408">
    <property type="entry name" value="GFO_IDH_MocA"/>
    <property type="match status" value="1"/>
</dbReference>
<dbReference type="Pfam" id="PF02894">
    <property type="entry name" value="GFO_IDH_MocA_C"/>
    <property type="match status" value="1"/>
</dbReference>
<dbReference type="SUPFAM" id="SSF55347">
    <property type="entry name" value="Glyceraldehyde-3-phosphate dehydrogenase-like, C-terminal domain"/>
    <property type="match status" value="1"/>
</dbReference>
<dbReference type="SUPFAM" id="SSF51735">
    <property type="entry name" value="NAD(P)-binding Rossmann-fold domains"/>
    <property type="match status" value="1"/>
</dbReference>
<gene>
    <name evidence="11" type="primary">wbpB</name>
    <name type="synonym">wlbA</name>
    <name type="ordered locus">PA3158</name>
</gene>
<accession>G3XD23</accession>
<accession>P72133</accession>
<accession>Q8KIQ7</accession>
<protein>
    <recommendedName>
        <fullName>UDP-N-acetyl-2-amino-2-deoxy-D-glucuronate oxidase</fullName>
        <ecNumber>1.1.1.335</ecNumber>
    </recommendedName>
    <alternativeName>
        <fullName>UDP-2-acetamido-2-deoxy-alpha-D-glucuronic acid 3-dehydrogenase</fullName>
    </alternativeName>
    <alternativeName>
        <fullName>UDP-N-acetyl-D-glucosaminuronic acid 3-oxidase</fullName>
        <shortName evidence="8">UDP-D-GlcNAcA 3-oxidase</shortName>
    </alternativeName>
</protein>
<comment type="function">
    <text evidence="3 4 5 6">Plays a role in the biosynthesis of B-band O antigen for serotype O5. Catalyzes the NAD-dependent oxidation of UDP-N-acetylglucosaminuronic acid (UDP-D-GlcNAcA) to UDP-2-acetamido-2-deoxy-3-oxo-D-glucuronic acid (UDP-3-oxo-D-GlcNAcA). Cannot use UDP-GlcNAc or UDP-GalNAc as the nucleotide sugar substrate, and can use only poorly UDP-D-glucuronic acid (UDP-GlcA). Undergoes an NAD(+) recycling mechanism using 2-oxoglutarate as an oxidant.</text>
</comment>
<comment type="catalytic activity">
    <reaction evidence="4 5">
        <text>UDP-2-acetamido-2-deoxy-alpha-D-glucuronate + NAD(+) = UDP-2-acetamido-2-deoxy-alpha-D-ribo-hex-3-uluronate + NADH + H(+)</text>
        <dbReference type="Rhea" id="RHEA:33579"/>
        <dbReference type="ChEBI" id="CHEBI:15378"/>
        <dbReference type="ChEBI" id="CHEBI:57540"/>
        <dbReference type="ChEBI" id="CHEBI:57945"/>
        <dbReference type="ChEBI" id="CHEBI:62250"/>
        <dbReference type="ChEBI" id="CHEBI:65040"/>
        <dbReference type="EC" id="1.1.1.335"/>
    </reaction>
</comment>
<comment type="catalytic activity">
    <reaction>
        <text>2-hydroxyglutarate + NAD(+) = 2-oxoglutarate + NADH + H(+)</text>
        <dbReference type="Rhea" id="RHEA:13449"/>
        <dbReference type="ChEBI" id="CHEBI:11596"/>
        <dbReference type="ChEBI" id="CHEBI:15378"/>
        <dbReference type="ChEBI" id="CHEBI:16810"/>
        <dbReference type="ChEBI" id="CHEBI:57540"/>
        <dbReference type="ChEBI" id="CHEBI:57945"/>
    </reaction>
</comment>
<comment type="biophysicochemical properties">
    <kinetics>
        <KM evidence="5 6">0.25 mM for UDP-GlcNAcA</KM>
        <KM evidence="5 6">1.35 mM for 2-oxoglutarate</KM>
        <Vmax evidence="5 6">28.0 umol/min/ug enzyme</Vmax>
    </kinetics>
    <phDependence>
        <text evidence="5">Optimum pH is 8.0 for the coupled WbpB/WbpE reaction.</text>
    </phDependence>
    <temperatureDependence>
        <text evidence="5">Optimum temperature is 30 degrees Celsius for the coupled WbpB/WbpE reaction.</text>
    </temperatureDependence>
</comment>
<comment type="pathway">
    <text evidence="3 4 5 7">Bacterial outer membrane biogenesis; LPS O-antigen biosynthesis.</text>
</comment>
<comment type="subunit">
    <text evidence="6">Homotetramer.</text>
</comment>
<comment type="miscellaneous">
    <text>Seems to proceed via a ping-pong reaction mechanism.</text>
</comment>
<comment type="similarity">
    <text evidence="1">Belongs to the Gfo/Idh/MocA family.</text>
</comment>
<sequence length="316" mass="35718">MKNFALIGAAGYIAPRHMRAIKDTGNCLVSAYDINDSVGIIDSISPQSEFFTEFEFFLDHASNLKRDSATALDYVSICSPNYLHYPHIAAGLRLGCDVICEKPLVPTPEMLDQLAVIERETDKRLYNILQLRHHQAIIALKDKVAREKSPHKYEVDLTYITSRGNWYLKSWKGDPRKSFGVATNIGVHFYDMLHFIFGKLQRNVVHFTSEYKAAGYLEYEQARVRWFLSVDANDLPESVKGKKPTYRSITVNGEEMEFSEGFTDLHTTSYEEILAGRGYGIDDARHCVETVNTIRSAVIVPASDNEGHPFVAALAR</sequence>